<accession>W5PSH7</accession>
<organism>
    <name type="scientific">Ovis aries</name>
    <name type="common">Sheep</name>
    <dbReference type="NCBI Taxonomy" id="9940"/>
    <lineage>
        <taxon>Eukaryota</taxon>
        <taxon>Metazoa</taxon>
        <taxon>Chordata</taxon>
        <taxon>Craniata</taxon>
        <taxon>Vertebrata</taxon>
        <taxon>Euteleostomi</taxon>
        <taxon>Mammalia</taxon>
        <taxon>Eutheria</taxon>
        <taxon>Laurasiatheria</taxon>
        <taxon>Artiodactyla</taxon>
        <taxon>Ruminantia</taxon>
        <taxon>Pecora</taxon>
        <taxon>Bovidae</taxon>
        <taxon>Caprinae</taxon>
        <taxon>Ovis</taxon>
    </lineage>
</organism>
<gene>
    <name evidence="8" type="primary">UCP1</name>
    <name evidence="4" type="synonym">Slc25a7</name>
</gene>
<protein>
    <recommendedName>
        <fullName evidence="9">Mitochondrial brown fat uncoupling protein 1</fullName>
        <shortName evidence="9">UCP 1</shortName>
    </recommendedName>
    <alternativeName>
        <fullName evidence="4">Solute carrier family 25 member 7</fullName>
    </alternativeName>
    <alternativeName>
        <fullName evidence="1">Thermogenin</fullName>
    </alternativeName>
</protein>
<dbReference type="EMBL" id="AMGL01037664">
    <property type="status" value="NOT_ANNOTATED_CDS"/>
    <property type="molecule type" value="Genomic_DNA"/>
</dbReference>
<dbReference type="RefSeq" id="XP_042089963.1">
    <property type="nucleotide sequence ID" value="XM_042234029.2"/>
</dbReference>
<dbReference type="SMR" id="W5PSH7"/>
<dbReference type="STRING" id="9940.ENSOARP00000013406"/>
<dbReference type="PaxDb" id="9940-ENSOARP00000013406"/>
<dbReference type="Ensembl" id="ENSOART00180022375">
    <property type="protein sequence ID" value="ENSOARP00180011297"/>
    <property type="gene ID" value="ENSOARG00180013697"/>
</dbReference>
<dbReference type="Ensembl" id="ENSOART00185040839">
    <property type="protein sequence ID" value="ENSOARP00185020151"/>
    <property type="gene ID" value="ENSOARG00185024819"/>
</dbReference>
<dbReference type="Ensembl" id="ENSOART00215056644">
    <property type="protein sequence ID" value="ENSOARP00215029765"/>
    <property type="gene ID" value="ENSOARG00215033869"/>
</dbReference>
<dbReference type="Ensembl" id="ENSOART00225051827">
    <property type="protein sequence ID" value="ENSOARP00225026161"/>
    <property type="gene ID" value="ENSOARG00225031294"/>
</dbReference>
<dbReference type="GeneID" id="494434"/>
<dbReference type="eggNOG" id="KOG0753">
    <property type="taxonomic scope" value="Eukaryota"/>
</dbReference>
<dbReference type="HOGENOM" id="CLU_015166_14_2_1"/>
<dbReference type="OMA" id="YTSVPNC"/>
<dbReference type="OrthoDB" id="448427at2759"/>
<dbReference type="Proteomes" id="UP000002356">
    <property type="component" value="Chromosome 17"/>
</dbReference>
<dbReference type="Bgee" id="ENSOARG00000012510">
    <property type="expression patterns" value="Expressed in prescapular lymph node and 28 other cell types or tissues"/>
</dbReference>
<dbReference type="GO" id="GO:0005743">
    <property type="term" value="C:mitochondrial inner membrane"/>
    <property type="evidence" value="ECO:0000314"/>
    <property type="project" value="UniProtKB"/>
</dbReference>
<dbReference type="GO" id="GO:1901612">
    <property type="term" value="F:cardiolipin binding"/>
    <property type="evidence" value="ECO:0000314"/>
    <property type="project" value="UniProtKB"/>
</dbReference>
<dbReference type="GO" id="GO:0019003">
    <property type="term" value="F:GDP binding"/>
    <property type="evidence" value="ECO:0000314"/>
    <property type="project" value="UniProtKB"/>
</dbReference>
<dbReference type="GO" id="GO:0036041">
    <property type="term" value="F:long-chain fatty acid binding"/>
    <property type="evidence" value="ECO:0000250"/>
    <property type="project" value="UniProtKB"/>
</dbReference>
<dbReference type="GO" id="GO:0017077">
    <property type="term" value="F:oxidative phosphorylation uncoupler activity"/>
    <property type="evidence" value="ECO:0000250"/>
    <property type="project" value="UniProtKB"/>
</dbReference>
<dbReference type="GO" id="GO:0015078">
    <property type="term" value="F:proton transmembrane transporter activity"/>
    <property type="evidence" value="ECO:0007669"/>
    <property type="project" value="Ensembl"/>
</dbReference>
<dbReference type="GO" id="GO:0022857">
    <property type="term" value="F:transmembrane transporter activity"/>
    <property type="evidence" value="ECO:0000314"/>
    <property type="project" value="UniProtKB"/>
</dbReference>
<dbReference type="GO" id="GO:1990845">
    <property type="term" value="P:adaptive thermogenesis"/>
    <property type="evidence" value="ECO:0000250"/>
    <property type="project" value="UniProtKB"/>
</dbReference>
<dbReference type="GO" id="GO:0050873">
    <property type="term" value="P:brown fat cell differentiation"/>
    <property type="evidence" value="ECO:0007669"/>
    <property type="project" value="Ensembl"/>
</dbReference>
<dbReference type="GO" id="GO:0070417">
    <property type="term" value="P:cellular response to cold"/>
    <property type="evidence" value="ECO:0007669"/>
    <property type="project" value="Ensembl"/>
</dbReference>
<dbReference type="GO" id="GO:0071398">
    <property type="term" value="P:cellular response to fatty acid"/>
    <property type="evidence" value="ECO:0000250"/>
    <property type="project" value="UniProtKB"/>
</dbReference>
<dbReference type="GO" id="GO:0032870">
    <property type="term" value="P:cellular response to hormone stimulus"/>
    <property type="evidence" value="ECO:0000250"/>
    <property type="project" value="UniProtKB"/>
</dbReference>
<dbReference type="GO" id="GO:0034614">
    <property type="term" value="P:cellular response to reactive oxygen species"/>
    <property type="evidence" value="ECO:0000250"/>
    <property type="project" value="UniProtKB"/>
</dbReference>
<dbReference type="GO" id="GO:0002024">
    <property type="term" value="P:diet induced thermogenesis"/>
    <property type="evidence" value="ECO:0007669"/>
    <property type="project" value="Ensembl"/>
</dbReference>
<dbReference type="GO" id="GO:1990542">
    <property type="term" value="P:mitochondrial transmembrane transport"/>
    <property type="evidence" value="ECO:0000314"/>
    <property type="project" value="UniProtKB"/>
</dbReference>
<dbReference type="GO" id="GO:0120162">
    <property type="term" value="P:positive regulation of cold-induced thermogenesis"/>
    <property type="evidence" value="ECO:0007669"/>
    <property type="project" value="Ensembl"/>
</dbReference>
<dbReference type="GO" id="GO:1902600">
    <property type="term" value="P:proton transmembrane transport"/>
    <property type="evidence" value="ECO:0000314"/>
    <property type="project" value="UniProtKB"/>
</dbReference>
<dbReference type="GO" id="GO:1903426">
    <property type="term" value="P:regulation of reactive oxygen species biosynthetic process"/>
    <property type="evidence" value="ECO:0000250"/>
    <property type="project" value="UniProtKB"/>
</dbReference>
<dbReference type="GO" id="GO:0006357">
    <property type="term" value="P:regulation of transcription by RNA polymerase II"/>
    <property type="evidence" value="ECO:0007669"/>
    <property type="project" value="Ensembl"/>
</dbReference>
<dbReference type="GO" id="GO:0031667">
    <property type="term" value="P:response to nutrient levels"/>
    <property type="evidence" value="ECO:0000250"/>
    <property type="project" value="UniProtKB"/>
</dbReference>
<dbReference type="GO" id="GO:0009266">
    <property type="term" value="P:response to temperature stimulus"/>
    <property type="evidence" value="ECO:0000250"/>
    <property type="project" value="UniProtKB"/>
</dbReference>
<dbReference type="FunFam" id="1.50.40.10:FF:000068">
    <property type="entry name" value="Mitochondrial brown fat uncoupling protein 1"/>
    <property type="match status" value="1"/>
</dbReference>
<dbReference type="Gene3D" id="1.50.40.10">
    <property type="entry name" value="Mitochondrial carrier domain"/>
    <property type="match status" value="1"/>
</dbReference>
<dbReference type="InterPro" id="IPR002067">
    <property type="entry name" value="Mit_carrier"/>
</dbReference>
<dbReference type="InterPro" id="IPR050391">
    <property type="entry name" value="Mito_Metabolite_Transporter"/>
</dbReference>
<dbReference type="InterPro" id="IPR018108">
    <property type="entry name" value="Mitochondrial_sb/sol_carrier"/>
</dbReference>
<dbReference type="InterPro" id="IPR023395">
    <property type="entry name" value="Mt_carrier_dom_sf"/>
</dbReference>
<dbReference type="PANTHER" id="PTHR45618">
    <property type="entry name" value="MITOCHONDRIAL DICARBOXYLATE CARRIER-RELATED"/>
    <property type="match status" value="1"/>
</dbReference>
<dbReference type="Pfam" id="PF00153">
    <property type="entry name" value="Mito_carr"/>
    <property type="match status" value="3"/>
</dbReference>
<dbReference type="PRINTS" id="PR00784">
    <property type="entry name" value="MTUNCOUPLING"/>
</dbReference>
<dbReference type="SUPFAM" id="SSF103506">
    <property type="entry name" value="Mitochondrial carrier"/>
    <property type="match status" value="1"/>
</dbReference>
<dbReference type="PROSITE" id="PS50920">
    <property type="entry name" value="SOLCAR"/>
    <property type="match status" value="3"/>
</dbReference>
<feature type="chain" id="PRO_0000438246" description="Mitochondrial brown fat uncoupling protein 1">
    <location>
        <begin position="1"/>
        <end position="305"/>
    </location>
</feature>
<feature type="topological domain" description="Mitochondrial intermembrane" evidence="2">
    <location>
        <begin position="1"/>
        <end position="10"/>
    </location>
</feature>
<feature type="transmembrane region" description="Helical; Name=1" evidence="5">
    <location>
        <begin position="11"/>
        <end position="32"/>
    </location>
</feature>
<feature type="topological domain" description="Mitochondrial matrix" evidence="2">
    <location>
        <begin position="33"/>
        <end position="73"/>
    </location>
</feature>
<feature type="transmembrane region" description="Helical; Name=2" evidence="5">
    <location>
        <begin position="74"/>
        <end position="96"/>
    </location>
</feature>
<feature type="topological domain" description="Mitochondrial intermembrane" evidence="2">
    <location>
        <begin position="97"/>
        <end position="114"/>
    </location>
</feature>
<feature type="transmembrane region" description="Helical; Name=3" evidence="5">
    <location>
        <begin position="115"/>
        <end position="131"/>
    </location>
</feature>
<feature type="topological domain" description="Mitochondrial matrix" evidence="2">
    <location>
        <begin position="132"/>
        <end position="176"/>
    </location>
</feature>
<feature type="transmembrane region" description="Helical; Name=4" evidence="5">
    <location>
        <begin position="177"/>
        <end position="193"/>
    </location>
</feature>
<feature type="topological domain" description="Mitochondrial intermembrane" evidence="2">
    <location>
        <begin position="194"/>
        <end position="210"/>
    </location>
</feature>
<feature type="transmembrane region" description="Helical; Name=5" evidence="5">
    <location>
        <begin position="211"/>
        <end position="230"/>
    </location>
</feature>
<feature type="topological domain" description="Mitochondrial matrix" evidence="2">
    <location>
        <begin position="231"/>
        <end position="264"/>
    </location>
</feature>
<feature type="transmembrane region" description="Helical; Name=6" evidence="5">
    <location>
        <begin position="265"/>
        <end position="287"/>
    </location>
</feature>
<feature type="topological domain" description="Mitochondrial intermembrane" evidence="2">
    <location>
        <begin position="288"/>
        <end position="305"/>
    </location>
</feature>
<feature type="repeat" description="Solcar 1" evidence="6">
    <location>
        <begin position="11"/>
        <end position="102"/>
    </location>
</feature>
<feature type="repeat" description="Solcar 2" evidence="6">
    <location>
        <begin position="109"/>
        <end position="199"/>
    </location>
</feature>
<feature type="repeat" description="Solcar 3" evidence="6">
    <location>
        <begin position="208"/>
        <end position="293"/>
    </location>
</feature>
<feature type="binding site" evidence="4">
    <location>
        <position position="56"/>
    </location>
    <ligand>
        <name>fatty acid 16:0</name>
        <dbReference type="ChEBI" id="CHEBI:78123"/>
    </ligand>
</feature>
<feature type="binding site" evidence="4">
    <location>
        <position position="267"/>
    </location>
    <ligand>
        <name>fatty acid 16:0</name>
        <dbReference type="ChEBI" id="CHEBI:78123"/>
    </ligand>
</feature>
<feature type="modified residue" description="Cysteine sulfenic acid (-SOH)" evidence="3">
    <location>
        <position position="252"/>
    </location>
</feature>
<name>UCP1_SHEEP</name>
<sequence>MVGHAATDVPPTMAVKIFSAGVAACVADIITFPLDTAKVRLQIQGECLTSSAFRYKGVLGTIITLAKTEGPVKLYSGLPAGLQRQISFASLRIGLYDTVQEFFTTGKEASLGSKISAGLTTGGVAVFIGQPTEVVKVRLQAQSHLHGPKPRYTGTYNAYRIIATTEGLTGLWKGTTPNLTRNVIINCTELVTYDLMKEALVKNKLLADDVPCHFVSAVVAGFCTTVLSSPVDVVKTRFVNSSPGQYTSVPNCAMMMLTREGPSAFFKGFVPSFLRLGSWNIIMFVCFEQLKRELMKSRQAMDCAT</sequence>
<evidence type="ECO:0000250" key="1">
    <source>
        <dbReference type="UniProtKB" id="P04575"/>
    </source>
</evidence>
<evidence type="ECO:0000250" key="2">
    <source>
        <dbReference type="UniProtKB" id="P04633"/>
    </source>
</evidence>
<evidence type="ECO:0000250" key="3">
    <source>
        <dbReference type="UniProtKB" id="P12242"/>
    </source>
</evidence>
<evidence type="ECO:0000250" key="4">
    <source>
        <dbReference type="UniProtKB" id="P25874"/>
    </source>
</evidence>
<evidence type="ECO:0000255" key="5"/>
<evidence type="ECO:0000255" key="6">
    <source>
        <dbReference type="PROSITE-ProRule" id="PRU00282"/>
    </source>
</evidence>
<evidence type="ECO:0000269" key="7">
    <source>
    </source>
</evidence>
<evidence type="ECO:0000303" key="8">
    <source>
    </source>
</evidence>
<evidence type="ECO:0000305" key="9"/>
<comment type="function">
    <text evidence="3 7">Mitochondrial protein responsible for thermogenic respiration, a specialized capacity of brown adipose tissue and beige fat that participates in non-shivering adaptive thermogenesis to temperature and diet variations and more generally to the regulation of energy balance (By similarity). Functions as a long-chain fatty acid/LCFA and proton symporter, simultaneously transporting one LCFA and one proton through the inner mitochondrial membrane (PubMed:26038550). However, LCFAs remaining associated with the transporter via their hydrophobic tails, it results in an apparent transport of protons activated by LCFAs. Thereby, dissipates the mitochondrial proton gradient and converts the energy of substrate oxydation into heat instead of ATP. Regulates the production of reactive oxygen species/ROS by mitochondria (By similarity).</text>
</comment>
<comment type="catalytic activity">
    <reaction evidence="7">
        <text>H(+)(in) = H(+)(out)</text>
        <dbReference type="Rhea" id="RHEA:34979"/>
        <dbReference type="ChEBI" id="CHEBI:15378"/>
    </reaction>
</comment>
<comment type="activity regulation">
    <text evidence="3">Has no constitutive proton transporter activity and has to be activated by long-chain fatty acids/LCFAs. Inhibited by purine nucleotides. Both purine nucleotides and LCFAs bind the cytosolic side of the transporter and directly compete to activate or inhibit it (PubMed:26038550). Activated by noradrenaline and reactive oxygen species. Despite lacking canonical translational encoding for selenocysteine, a small pool of the protein has been observed to selectively incorporate selenocysteine at 'Cys-252'. Selenocysteine-modified protein is highly sensitive to redox modification and may constitute a pool of protein highly sensitive to activation by elevated levels of reactive oxygen species (ROS) (By similarity).</text>
</comment>
<comment type="subunit">
    <text evidence="4 7">Most probably functions as a monomer (PubMed:26038550). Binds one purine nucleotide per monomer (PubMed:26038550). However, has also been suggested to function as a homodimer or a homotetramer (By similarity). Tightly associates with cardiolipin in the mitochondrion inner membrane; may stabilize and regulate its activity (PubMed:26038550).</text>
</comment>
<comment type="subcellular location">
    <subcellularLocation>
        <location evidence="7">Mitochondrion inner membrane</location>
        <topology evidence="2">Multi-pass membrane protein</topology>
    </subcellularLocation>
</comment>
<comment type="PTM">
    <text evidence="3">May undergo sulfenylation upon cold exposure. May increase the sensitivity of UCP1 thermogenic function to the activation by noradrenaline probably through structural effects.</text>
</comment>
<comment type="PTM">
    <text evidence="2">May undergo ubiquitin-mediated proteasomal degradation.</text>
</comment>
<comment type="similarity">
    <text evidence="9">Belongs to the mitochondrial carrier (TC 2.A.29) family.</text>
</comment>
<reference key="1">
    <citation type="journal article" date="2010" name="Anim. Genet.">
        <title>The sheep genome reference sequence: a work in progress.</title>
        <authorList>
            <person name="Archibald A.L."/>
            <person name="Cockett N.E."/>
            <person name="Dalrymple B.P."/>
            <person name="Faraut T."/>
            <person name="Kijas J.W."/>
            <person name="Maddox J.F."/>
            <person name="McEwan J.C."/>
            <person name="Hutton Oddy V."/>
            <person name="Raadsma H.W."/>
            <person name="Wade C."/>
            <person name="Wang J."/>
            <person name="Wang W."/>
            <person name="Xun X."/>
        </authorList>
    </citation>
    <scope>NUCLEOTIDE SEQUENCE [LARGE SCALE GENOMIC DNA]</scope>
</reference>
<reference key="2">
    <citation type="journal article" date="2015" name="Proc. Natl. Acad. Sci. U.S.A.">
        <title>Uncoupling protein 1 binds one nucleotide per monomer and is stabilized by tightly bound cardiolipin.</title>
        <authorList>
            <person name="Lee Y."/>
            <person name="Willers C."/>
            <person name="Kunji E.R."/>
            <person name="Crichton P.G."/>
        </authorList>
    </citation>
    <scope>FUNCTION</scope>
    <scope>TRANSPORTER ACTIVITY</scope>
    <scope>ACTIVITY REGULATION</scope>
    <scope>SUBUNIT</scope>
    <scope>GDP-BINDING</scope>
    <scope>SUBCELLULAR LOCATION</scope>
</reference>
<proteinExistence type="evidence at protein level"/>
<keyword id="KW-0407">Ion channel</keyword>
<keyword id="KW-0406">Ion transport</keyword>
<keyword id="KW-0472">Membrane</keyword>
<keyword id="KW-0496">Mitochondrion</keyword>
<keyword id="KW-0999">Mitochondrion inner membrane</keyword>
<keyword id="KW-0558">Oxidation</keyword>
<keyword id="KW-1185">Reference proteome</keyword>
<keyword id="KW-0677">Repeat</keyword>
<keyword id="KW-0812">Transmembrane</keyword>
<keyword id="KW-1133">Transmembrane helix</keyword>
<keyword id="KW-0813">Transport</keyword>